<protein>
    <recommendedName>
        <fullName evidence="1">Urease accessory protein UreD</fullName>
    </recommendedName>
</protein>
<dbReference type="EMBL" id="CP000046">
    <property type="protein sequence ID" value="AAW38506.1"/>
    <property type="molecule type" value="Genomic_DNA"/>
</dbReference>
<dbReference type="RefSeq" id="WP_000344352.1">
    <property type="nucleotide sequence ID" value="NZ_JBGOFO010000004.1"/>
</dbReference>
<dbReference type="SMR" id="Q5HDR4"/>
<dbReference type="KEGG" id="sac:SACOL2286"/>
<dbReference type="HOGENOM" id="CLU_056339_5_0_9"/>
<dbReference type="Proteomes" id="UP000000530">
    <property type="component" value="Chromosome"/>
</dbReference>
<dbReference type="GO" id="GO:0005737">
    <property type="term" value="C:cytoplasm"/>
    <property type="evidence" value="ECO:0007669"/>
    <property type="project" value="UniProtKB-SubCell"/>
</dbReference>
<dbReference type="GO" id="GO:0016151">
    <property type="term" value="F:nickel cation binding"/>
    <property type="evidence" value="ECO:0007669"/>
    <property type="project" value="UniProtKB-UniRule"/>
</dbReference>
<dbReference type="HAMAP" id="MF_01384">
    <property type="entry name" value="UreD"/>
    <property type="match status" value="1"/>
</dbReference>
<dbReference type="InterPro" id="IPR002669">
    <property type="entry name" value="UreD"/>
</dbReference>
<dbReference type="PANTHER" id="PTHR33643">
    <property type="entry name" value="UREASE ACCESSORY PROTEIN D"/>
    <property type="match status" value="1"/>
</dbReference>
<dbReference type="PANTHER" id="PTHR33643:SF1">
    <property type="entry name" value="UREASE ACCESSORY PROTEIN D"/>
    <property type="match status" value="1"/>
</dbReference>
<dbReference type="Pfam" id="PF01774">
    <property type="entry name" value="UreD"/>
    <property type="match status" value="1"/>
</dbReference>
<feature type="chain" id="PRO_0000346595" description="Urease accessory protein UreD">
    <location>
        <begin position="1"/>
        <end position="278"/>
    </location>
</feature>
<accession>Q5HDR4</accession>
<sequence length="278" mass="32437">MDEQQWTGQLDLTVFFDGNRSVSRDIFFEKALKVIRPVYLNQSTIPTFYIVNVGGGYLDGDRYRMNVNVEDNAKVTLTSQGATKIYKTPSNHVEQYQTFNLKDNAYLEYVADPIIAYENAKFYQHNTFNLNNSSSLFYTDILTPGYSKTGEAFKYQYMHLINEIYIEDELVTYDNLLLNPNKQSINEIGYMEHYSHYGSAYFIHEDVNQKLIDSVYETISSYSNTFDCRVAISQLPTHGFAVRIFAYRTQIIEKILGTIQSYIAENIYDRKLDFLRKY</sequence>
<name>URED_STAAC</name>
<comment type="function">
    <text evidence="1">Required for maturation of urease via the functional incorporation of the urease nickel metallocenter.</text>
</comment>
<comment type="subunit">
    <text evidence="1">UreD, UreF and UreG form a complex that acts as a GTP-hydrolysis-dependent molecular chaperone, activating the urease apoprotein by helping to assemble the nickel containing metallocenter of UreC. The UreE protein probably delivers the nickel.</text>
</comment>
<comment type="subcellular location">
    <subcellularLocation>
        <location evidence="1">Cytoplasm</location>
    </subcellularLocation>
</comment>
<comment type="similarity">
    <text evidence="1">Belongs to the UreD family.</text>
</comment>
<keyword id="KW-0143">Chaperone</keyword>
<keyword id="KW-0963">Cytoplasm</keyword>
<keyword id="KW-0996">Nickel insertion</keyword>
<reference key="1">
    <citation type="journal article" date="2005" name="J. Bacteriol.">
        <title>Insights on evolution of virulence and resistance from the complete genome analysis of an early methicillin-resistant Staphylococcus aureus strain and a biofilm-producing methicillin-resistant Staphylococcus epidermidis strain.</title>
        <authorList>
            <person name="Gill S.R."/>
            <person name="Fouts D.E."/>
            <person name="Archer G.L."/>
            <person name="Mongodin E.F."/>
            <person name="DeBoy R.T."/>
            <person name="Ravel J."/>
            <person name="Paulsen I.T."/>
            <person name="Kolonay J.F."/>
            <person name="Brinkac L.M."/>
            <person name="Beanan M.J."/>
            <person name="Dodson R.J."/>
            <person name="Daugherty S.C."/>
            <person name="Madupu R."/>
            <person name="Angiuoli S.V."/>
            <person name="Durkin A.S."/>
            <person name="Haft D.H."/>
            <person name="Vamathevan J.J."/>
            <person name="Khouri H."/>
            <person name="Utterback T.R."/>
            <person name="Lee C."/>
            <person name="Dimitrov G."/>
            <person name="Jiang L."/>
            <person name="Qin H."/>
            <person name="Weidman J."/>
            <person name="Tran K."/>
            <person name="Kang K.H."/>
            <person name="Hance I.R."/>
            <person name="Nelson K.E."/>
            <person name="Fraser C.M."/>
        </authorList>
    </citation>
    <scope>NUCLEOTIDE SEQUENCE [LARGE SCALE GENOMIC DNA]</scope>
    <source>
        <strain>COL</strain>
    </source>
</reference>
<organism>
    <name type="scientific">Staphylococcus aureus (strain COL)</name>
    <dbReference type="NCBI Taxonomy" id="93062"/>
    <lineage>
        <taxon>Bacteria</taxon>
        <taxon>Bacillati</taxon>
        <taxon>Bacillota</taxon>
        <taxon>Bacilli</taxon>
        <taxon>Bacillales</taxon>
        <taxon>Staphylococcaceae</taxon>
        <taxon>Staphylococcus</taxon>
    </lineage>
</organism>
<gene>
    <name evidence="1" type="primary">ureD</name>
    <name type="ordered locus">SACOL2286</name>
</gene>
<proteinExistence type="inferred from homology"/>
<evidence type="ECO:0000255" key="1">
    <source>
        <dbReference type="HAMAP-Rule" id="MF_01384"/>
    </source>
</evidence>